<comment type="cofactor">
    <cofactor evidence="2">
        <name>Zn(2+)</name>
        <dbReference type="ChEBI" id="CHEBI:29105"/>
    </cofactor>
</comment>
<comment type="alternative products">
    <event type="alternative splicing"/>
    <isoform>
        <id>Q8BJH1-1</id>
        <name>1</name>
        <sequence type="displayed"/>
    </isoform>
    <isoform>
        <id>Q8BJH1-2</id>
        <name>2</name>
        <sequence type="described" ref="VSP_023580"/>
    </isoform>
</comment>
<comment type="similarity">
    <text evidence="5">Belongs to the ZC2HC1 family.</text>
</comment>
<evidence type="ECO:0000250" key="1">
    <source>
        <dbReference type="UniProtKB" id="Q96GY0"/>
    </source>
</evidence>
<evidence type="ECO:0000255" key="2">
    <source>
        <dbReference type="PROSITE-ProRule" id="PRU01371"/>
    </source>
</evidence>
<evidence type="ECO:0000256" key="3">
    <source>
        <dbReference type="SAM" id="MobiDB-lite"/>
    </source>
</evidence>
<evidence type="ECO:0000303" key="4">
    <source>
    </source>
</evidence>
<evidence type="ECO:0000305" key="5"/>
<name>ZC21A_MOUSE</name>
<proteinExistence type="evidence at protein level"/>
<protein>
    <recommendedName>
        <fullName>Zinc finger C2HC domain-containing protein 1A</fullName>
    </recommendedName>
</protein>
<organism>
    <name type="scientific">Mus musculus</name>
    <name type="common">Mouse</name>
    <dbReference type="NCBI Taxonomy" id="10090"/>
    <lineage>
        <taxon>Eukaryota</taxon>
        <taxon>Metazoa</taxon>
        <taxon>Chordata</taxon>
        <taxon>Craniata</taxon>
        <taxon>Vertebrata</taxon>
        <taxon>Euteleostomi</taxon>
        <taxon>Mammalia</taxon>
        <taxon>Eutheria</taxon>
        <taxon>Euarchontoglires</taxon>
        <taxon>Glires</taxon>
        <taxon>Rodentia</taxon>
        <taxon>Myomorpha</taxon>
        <taxon>Muroidea</taxon>
        <taxon>Muridae</taxon>
        <taxon>Murinae</taxon>
        <taxon>Mus</taxon>
        <taxon>Mus</taxon>
    </lineage>
</organism>
<gene>
    <name type="primary">Zc2hc1a</name>
    <name type="synonym">Fam164a</name>
</gene>
<accession>Q8BJH1</accession>
<accession>Q3TCP6</accession>
<sequence>MDGLEENGSVVQVGDLLPCKICGRTFFPLALKKHGPICQKTATKKRKTFDSSRQRAEGTDIPTVKPLKPRPEPPKKPSNWRRKHEEFIATIRAAKGLDQALKEGGKLPPPPPPSYDPDYIQCPYCQRRFNENAADRHINFCKEQAARISNKGKFSTDSKGKPASRPQYKPSPLKKSNPPGIPSSGSSRLPQPSTTSKTIVGVPTGKASSVNSPLGNKPQTLSPSHRAIAAPQAGANTKARNTTPPSLARNSVAGVLTNKRKTLTENYAARPDGDYTSSVNGGNSKGIEGNSSGHLPKFCHECGTKYPVEWAKFCCECGIRRMIL</sequence>
<reference key="1">
    <citation type="journal article" date="2005" name="Science">
        <title>The transcriptional landscape of the mammalian genome.</title>
        <authorList>
            <person name="Carninci P."/>
            <person name="Kasukawa T."/>
            <person name="Katayama S."/>
            <person name="Gough J."/>
            <person name="Frith M.C."/>
            <person name="Maeda N."/>
            <person name="Oyama R."/>
            <person name="Ravasi T."/>
            <person name="Lenhard B."/>
            <person name="Wells C."/>
            <person name="Kodzius R."/>
            <person name="Shimokawa K."/>
            <person name="Bajic V.B."/>
            <person name="Brenner S.E."/>
            <person name="Batalov S."/>
            <person name="Forrest A.R."/>
            <person name="Zavolan M."/>
            <person name="Davis M.J."/>
            <person name="Wilming L.G."/>
            <person name="Aidinis V."/>
            <person name="Allen J.E."/>
            <person name="Ambesi-Impiombato A."/>
            <person name="Apweiler R."/>
            <person name="Aturaliya R.N."/>
            <person name="Bailey T.L."/>
            <person name="Bansal M."/>
            <person name="Baxter L."/>
            <person name="Beisel K.W."/>
            <person name="Bersano T."/>
            <person name="Bono H."/>
            <person name="Chalk A.M."/>
            <person name="Chiu K.P."/>
            <person name="Choudhary V."/>
            <person name="Christoffels A."/>
            <person name="Clutterbuck D.R."/>
            <person name="Crowe M.L."/>
            <person name="Dalla E."/>
            <person name="Dalrymple B.P."/>
            <person name="de Bono B."/>
            <person name="Della Gatta G."/>
            <person name="di Bernardo D."/>
            <person name="Down T."/>
            <person name="Engstrom P."/>
            <person name="Fagiolini M."/>
            <person name="Faulkner G."/>
            <person name="Fletcher C.F."/>
            <person name="Fukushima T."/>
            <person name="Furuno M."/>
            <person name="Futaki S."/>
            <person name="Gariboldi M."/>
            <person name="Georgii-Hemming P."/>
            <person name="Gingeras T.R."/>
            <person name="Gojobori T."/>
            <person name="Green R.E."/>
            <person name="Gustincich S."/>
            <person name="Harbers M."/>
            <person name="Hayashi Y."/>
            <person name="Hensch T.K."/>
            <person name="Hirokawa N."/>
            <person name="Hill D."/>
            <person name="Huminiecki L."/>
            <person name="Iacono M."/>
            <person name="Ikeo K."/>
            <person name="Iwama A."/>
            <person name="Ishikawa T."/>
            <person name="Jakt M."/>
            <person name="Kanapin A."/>
            <person name="Katoh M."/>
            <person name="Kawasawa Y."/>
            <person name="Kelso J."/>
            <person name="Kitamura H."/>
            <person name="Kitano H."/>
            <person name="Kollias G."/>
            <person name="Krishnan S.P."/>
            <person name="Kruger A."/>
            <person name="Kummerfeld S.K."/>
            <person name="Kurochkin I.V."/>
            <person name="Lareau L.F."/>
            <person name="Lazarevic D."/>
            <person name="Lipovich L."/>
            <person name="Liu J."/>
            <person name="Liuni S."/>
            <person name="McWilliam S."/>
            <person name="Madan Babu M."/>
            <person name="Madera M."/>
            <person name="Marchionni L."/>
            <person name="Matsuda H."/>
            <person name="Matsuzawa S."/>
            <person name="Miki H."/>
            <person name="Mignone F."/>
            <person name="Miyake S."/>
            <person name="Morris K."/>
            <person name="Mottagui-Tabar S."/>
            <person name="Mulder N."/>
            <person name="Nakano N."/>
            <person name="Nakauchi H."/>
            <person name="Ng P."/>
            <person name="Nilsson R."/>
            <person name="Nishiguchi S."/>
            <person name="Nishikawa S."/>
            <person name="Nori F."/>
            <person name="Ohara O."/>
            <person name="Okazaki Y."/>
            <person name="Orlando V."/>
            <person name="Pang K.C."/>
            <person name="Pavan W.J."/>
            <person name="Pavesi G."/>
            <person name="Pesole G."/>
            <person name="Petrovsky N."/>
            <person name="Piazza S."/>
            <person name="Reed J."/>
            <person name="Reid J.F."/>
            <person name="Ring B.Z."/>
            <person name="Ringwald M."/>
            <person name="Rost B."/>
            <person name="Ruan Y."/>
            <person name="Salzberg S.L."/>
            <person name="Sandelin A."/>
            <person name="Schneider C."/>
            <person name="Schoenbach C."/>
            <person name="Sekiguchi K."/>
            <person name="Semple C.A."/>
            <person name="Seno S."/>
            <person name="Sessa L."/>
            <person name="Sheng Y."/>
            <person name="Shibata Y."/>
            <person name="Shimada H."/>
            <person name="Shimada K."/>
            <person name="Silva D."/>
            <person name="Sinclair B."/>
            <person name="Sperling S."/>
            <person name="Stupka E."/>
            <person name="Sugiura K."/>
            <person name="Sultana R."/>
            <person name="Takenaka Y."/>
            <person name="Taki K."/>
            <person name="Tammoja K."/>
            <person name="Tan S.L."/>
            <person name="Tang S."/>
            <person name="Taylor M.S."/>
            <person name="Tegner J."/>
            <person name="Teichmann S.A."/>
            <person name="Ueda H.R."/>
            <person name="van Nimwegen E."/>
            <person name="Verardo R."/>
            <person name="Wei C.L."/>
            <person name="Yagi K."/>
            <person name="Yamanishi H."/>
            <person name="Zabarovsky E."/>
            <person name="Zhu S."/>
            <person name="Zimmer A."/>
            <person name="Hide W."/>
            <person name="Bult C."/>
            <person name="Grimmond S.M."/>
            <person name="Teasdale R.D."/>
            <person name="Liu E.T."/>
            <person name="Brusic V."/>
            <person name="Quackenbush J."/>
            <person name="Wahlestedt C."/>
            <person name="Mattick J.S."/>
            <person name="Hume D.A."/>
            <person name="Kai C."/>
            <person name="Sasaki D."/>
            <person name="Tomaru Y."/>
            <person name="Fukuda S."/>
            <person name="Kanamori-Katayama M."/>
            <person name="Suzuki M."/>
            <person name="Aoki J."/>
            <person name="Arakawa T."/>
            <person name="Iida J."/>
            <person name="Imamura K."/>
            <person name="Itoh M."/>
            <person name="Kato T."/>
            <person name="Kawaji H."/>
            <person name="Kawagashira N."/>
            <person name="Kawashima T."/>
            <person name="Kojima M."/>
            <person name="Kondo S."/>
            <person name="Konno H."/>
            <person name="Nakano K."/>
            <person name="Ninomiya N."/>
            <person name="Nishio T."/>
            <person name="Okada M."/>
            <person name="Plessy C."/>
            <person name="Shibata K."/>
            <person name="Shiraki T."/>
            <person name="Suzuki S."/>
            <person name="Tagami M."/>
            <person name="Waki K."/>
            <person name="Watahiki A."/>
            <person name="Okamura-Oho Y."/>
            <person name="Suzuki H."/>
            <person name="Kawai J."/>
            <person name="Hayashizaki Y."/>
        </authorList>
    </citation>
    <scope>NUCLEOTIDE SEQUENCE [LARGE SCALE MRNA] (ISOFORMS 1 AND 2)</scope>
    <source>
        <strain>C57BL/6J</strain>
        <strain>NOD</strain>
        <tissue>Spinal ganglion</tissue>
    </source>
</reference>
<reference key="2">
    <citation type="journal article" date="2004" name="Genome Res.">
        <title>The status, quality, and expansion of the NIH full-length cDNA project: the Mammalian Gene Collection (MGC).</title>
        <authorList>
            <consortium name="The MGC Project Team"/>
        </authorList>
    </citation>
    <scope>NUCLEOTIDE SEQUENCE [LARGE SCALE MRNA] (ISOFORM 1)</scope>
    <source>
        <strain>C57BL/6J</strain>
        <tissue>Brain</tissue>
    </source>
</reference>
<reference key="3">
    <citation type="journal article" date="2010" name="Cell">
        <title>A tissue-specific atlas of mouse protein phosphorylation and expression.</title>
        <authorList>
            <person name="Huttlin E.L."/>
            <person name="Jedrychowski M.P."/>
            <person name="Elias J.E."/>
            <person name="Goswami T."/>
            <person name="Rad R."/>
            <person name="Beausoleil S.A."/>
            <person name="Villen J."/>
            <person name="Haas W."/>
            <person name="Sowa M.E."/>
            <person name="Gygi S.P."/>
        </authorList>
    </citation>
    <scope>IDENTIFICATION BY MASS SPECTROMETRY [LARGE SCALE ANALYSIS]</scope>
    <source>
        <tissue>Brain</tissue>
    </source>
</reference>
<keyword id="KW-0025">Alternative splicing</keyword>
<keyword id="KW-0479">Metal-binding</keyword>
<keyword id="KW-0597">Phosphoprotein</keyword>
<keyword id="KW-1185">Reference proteome</keyword>
<keyword id="KW-0677">Repeat</keyword>
<keyword id="KW-0862">Zinc</keyword>
<keyword id="KW-0863">Zinc-finger</keyword>
<dbReference type="EMBL" id="AK083941">
    <property type="protein sequence ID" value="BAC39075.1"/>
    <property type="molecule type" value="mRNA"/>
</dbReference>
<dbReference type="EMBL" id="AK170609">
    <property type="protein sequence ID" value="BAE41909.1"/>
    <property type="molecule type" value="mRNA"/>
</dbReference>
<dbReference type="EMBL" id="BC087731">
    <property type="protein sequence ID" value="AAH87731.1"/>
    <property type="molecule type" value="mRNA"/>
</dbReference>
<dbReference type="CCDS" id="CCDS17230.1">
    <molecule id="Q8BJH1-1"/>
</dbReference>
<dbReference type="RefSeq" id="NP_775273.1">
    <molecule id="Q8BJH1-1"/>
    <property type="nucleotide sequence ID" value="NM_173181.4"/>
</dbReference>
<dbReference type="BioGRID" id="212091">
    <property type="interactions" value="6"/>
</dbReference>
<dbReference type="FunCoup" id="Q8BJH1">
    <property type="interactions" value="229"/>
</dbReference>
<dbReference type="IntAct" id="Q8BJH1">
    <property type="interactions" value="1"/>
</dbReference>
<dbReference type="STRING" id="10090.ENSMUSP00000054734"/>
<dbReference type="GlyGen" id="Q8BJH1">
    <property type="glycosylation" value="3 sites, 1 O-linked glycan (3 sites)"/>
</dbReference>
<dbReference type="iPTMnet" id="Q8BJH1"/>
<dbReference type="PhosphoSitePlus" id="Q8BJH1"/>
<dbReference type="SwissPalm" id="Q8BJH1"/>
<dbReference type="PaxDb" id="10090-ENSMUSP00000054734"/>
<dbReference type="PeptideAtlas" id="Q8BJH1"/>
<dbReference type="ProteomicsDB" id="275235">
    <molecule id="Q8BJH1-1"/>
</dbReference>
<dbReference type="ProteomicsDB" id="275236">
    <molecule id="Q8BJH1-2"/>
</dbReference>
<dbReference type="Pumba" id="Q8BJH1"/>
<dbReference type="Antibodypedia" id="12394">
    <property type="antibodies" value="283 antibodies from 19 providers"/>
</dbReference>
<dbReference type="Ensembl" id="ENSMUST00000051064.9">
    <molecule id="Q8BJH1-1"/>
    <property type="protein sequence ID" value="ENSMUSP00000054734.4"/>
    <property type="gene ID" value="ENSMUSG00000043542.13"/>
</dbReference>
<dbReference type="Ensembl" id="ENSMUST00000193010.2">
    <molecule id="Q8BJH1-2"/>
    <property type="protein sequence ID" value="ENSMUSP00000141497.2"/>
    <property type="gene ID" value="ENSMUSG00000043542.13"/>
</dbReference>
<dbReference type="GeneID" id="67306"/>
<dbReference type="KEGG" id="mmu:67306"/>
<dbReference type="UCSC" id="uc008oog.1">
    <molecule id="Q8BJH1-1"/>
    <property type="organism name" value="mouse"/>
</dbReference>
<dbReference type="UCSC" id="uc012cnc.1">
    <molecule id="Q8BJH1-2"/>
    <property type="organism name" value="mouse"/>
</dbReference>
<dbReference type="AGR" id="MGI:1914556"/>
<dbReference type="CTD" id="51101"/>
<dbReference type="MGI" id="MGI:1914556">
    <property type="gene designation" value="Zc2hc1a"/>
</dbReference>
<dbReference type="VEuPathDB" id="HostDB:ENSMUSG00000043542"/>
<dbReference type="eggNOG" id="KOG3940">
    <property type="taxonomic scope" value="Eukaryota"/>
</dbReference>
<dbReference type="GeneTree" id="ENSGT00940000159419"/>
<dbReference type="HOGENOM" id="CLU_855170_0_0_1"/>
<dbReference type="InParanoid" id="Q8BJH1"/>
<dbReference type="OMA" id="ARHEQIC"/>
<dbReference type="OrthoDB" id="10066537at2759"/>
<dbReference type="PhylomeDB" id="Q8BJH1"/>
<dbReference type="TreeFam" id="TF319585"/>
<dbReference type="BioGRID-ORCS" id="67306">
    <property type="hits" value="0 hits in 76 CRISPR screens"/>
</dbReference>
<dbReference type="CD-CODE" id="CE726F99">
    <property type="entry name" value="Postsynaptic density"/>
</dbReference>
<dbReference type="ChiTaRS" id="Zc2hc1a">
    <property type="organism name" value="mouse"/>
</dbReference>
<dbReference type="PRO" id="PR:Q8BJH1"/>
<dbReference type="Proteomes" id="UP000000589">
    <property type="component" value="Chromosome 3"/>
</dbReference>
<dbReference type="RNAct" id="Q8BJH1">
    <property type="molecule type" value="protein"/>
</dbReference>
<dbReference type="Bgee" id="ENSMUSG00000043542">
    <property type="expression patterns" value="Expressed in trigeminal ganglion and 229 other cell types or tissues"/>
</dbReference>
<dbReference type="GO" id="GO:0008270">
    <property type="term" value="F:zinc ion binding"/>
    <property type="evidence" value="ECO:0007669"/>
    <property type="project" value="UniProtKB-KW"/>
</dbReference>
<dbReference type="Gene3D" id="3.30.160.60">
    <property type="entry name" value="Classic Zinc Finger"/>
    <property type="match status" value="1"/>
</dbReference>
<dbReference type="InterPro" id="IPR026319">
    <property type="entry name" value="ZC2HC1A/B-like"/>
</dbReference>
<dbReference type="InterPro" id="IPR049899">
    <property type="entry name" value="Znf_C2HC_C3H"/>
</dbReference>
<dbReference type="PANTHER" id="PTHR13555">
    <property type="entry name" value="C2H2 ZINC FINGER CGI-62-RELATED"/>
    <property type="match status" value="1"/>
</dbReference>
<dbReference type="PANTHER" id="PTHR13555:SF25">
    <property type="entry name" value="ZINC FINGER C2HC DOMAIN-CONTAINING PROTEIN 1A"/>
    <property type="match status" value="1"/>
</dbReference>
<dbReference type="Pfam" id="PF13913">
    <property type="entry name" value="zf-C2HC_2"/>
    <property type="match status" value="2"/>
</dbReference>
<dbReference type="PROSITE" id="PS52027">
    <property type="entry name" value="ZF_C2HC_C3H"/>
    <property type="match status" value="2"/>
</dbReference>
<feature type="chain" id="PRO_0000280247" description="Zinc finger C2HC domain-containing protein 1A">
    <location>
        <begin position="1"/>
        <end position="324"/>
    </location>
</feature>
<feature type="zinc finger region" description="C2HC/C3H-type 1" evidence="2">
    <location>
        <begin position="15"/>
        <end position="44"/>
    </location>
</feature>
<feature type="zinc finger region" description="C2HC/C3H-type 2" evidence="2">
    <location>
        <begin position="118"/>
        <end position="147"/>
    </location>
</feature>
<feature type="region of interest" description="Disordered" evidence="3">
    <location>
        <begin position="43"/>
        <end position="83"/>
    </location>
</feature>
<feature type="region of interest" description="Disordered" evidence="3">
    <location>
        <begin position="149"/>
        <end position="225"/>
    </location>
</feature>
<feature type="compositionally biased region" description="Basic and acidic residues" evidence="3">
    <location>
        <begin position="48"/>
        <end position="58"/>
    </location>
</feature>
<feature type="compositionally biased region" description="Low complexity" evidence="3">
    <location>
        <begin position="176"/>
        <end position="187"/>
    </location>
</feature>
<feature type="compositionally biased region" description="Polar residues" evidence="3">
    <location>
        <begin position="188"/>
        <end position="198"/>
    </location>
</feature>
<feature type="compositionally biased region" description="Polar residues" evidence="3">
    <location>
        <begin position="206"/>
        <end position="223"/>
    </location>
</feature>
<feature type="binding site" evidence="2">
    <location>
        <position position="19"/>
    </location>
    <ligand>
        <name>Zn(2+)</name>
        <dbReference type="ChEBI" id="CHEBI:29105"/>
        <label>1</label>
    </ligand>
</feature>
<feature type="binding site" evidence="2">
    <location>
        <position position="22"/>
    </location>
    <ligand>
        <name>Zn(2+)</name>
        <dbReference type="ChEBI" id="CHEBI:29105"/>
        <label>1</label>
    </ligand>
</feature>
<feature type="binding site" evidence="2">
    <location>
        <position position="34"/>
    </location>
    <ligand>
        <name>Zn(2+)</name>
        <dbReference type="ChEBI" id="CHEBI:29105"/>
        <label>1</label>
    </ligand>
</feature>
<feature type="binding site" evidence="2">
    <location>
        <position position="38"/>
    </location>
    <ligand>
        <name>Zn(2+)</name>
        <dbReference type="ChEBI" id="CHEBI:29105"/>
        <label>1</label>
    </ligand>
</feature>
<feature type="binding site" evidence="2">
    <location>
        <position position="122"/>
    </location>
    <ligand>
        <name>Zn(2+)</name>
        <dbReference type="ChEBI" id="CHEBI:29105"/>
        <label>2</label>
    </ligand>
</feature>
<feature type="binding site" evidence="2">
    <location>
        <position position="125"/>
    </location>
    <ligand>
        <name>Zn(2+)</name>
        <dbReference type="ChEBI" id="CHEBI:29105"/>
        <label>2</label>
    </ligand>
</feature>
<feature type="binding site" evidence="2">
    <location>
        <position position="137"/>
    </location>
    <ligand>
        <name>Zn(2+)</name>
        <dbReference type="ChEBI" id="CHEBI:29105"/>
        <label>2</label>
    </ligand>
</feature>
<feature type="binding site" evidence="2">
    <location>
        <position position="141"/>
    </location>
    <ligand>
        <name>Zn(2+)</name>
        <dbReference type="ChEBI" id="CHEBI:29105"/>
        <label>2</label>
    </ligand>
</feature>
<feature type="modified residue" description="Phosphoserine" evidence="1">
    <location>
        <position position="222"/>
    </location>
</feature>
<feature type="modified residue" description="Phosphothreonine" evidence="1">
    <location>
        <position position="243"/>
    </location>
</feature>
<feature type="modified residue" description="Phosphoserine" evidence="1">
    <location>
        <position position="291"/>
    </location>
</feature>
<feature type="splice variant" id="VSP_023580" description="In isoform 2." evidence="4">
    <location>
        <begin position="235"/>
        <end position="270"/>
    </location>
</feature>